<evidence type="ECO:0000255" key="1">
    <source>
        <dbReference type="HAMAP-Rule" id="MF_01518"/>
    </source>
</evidence>
<sequence length="588" mass="63729">MNNSINHKFHHISRAEYQELLAVSRGDAVADYIIDNVSILDLINGGEISGPIVIKGRYIAGVGAEYADAPALQRIDARGATAVPGFIDAHLHIESSMMTPVTFETATLPRGLTTVICDPHEIVNVMGEAGFAWFARCAEQARQNQYLQVSSCVPALEGCDVNGASFTLEQMLAWRDHPQVTGLAEMMDYPGVISGQNALLDKLDAFRHLTLDGHCPGLGGKELNAYIAAGIENCHESYQLEEGRRKLQLGMSLMIREGSAARNLNALAPLINEFNSPQCMLCTDDRNPWEIAHEGHIDALIRRLIEQHNVPLHVAYRVASWSTARHFGLNHLGLLAPGKQADIVLLSDARKVTVQQVLVKGEPIDAQTLQAKESARLAQSAPPYGNTISRQPVSASDFALQFTPGKRYRVIDVIHNELITHSRSSVYSENGFDRDDVCFIAVLERYGQRLAPACGLLGGFGLNEGALAATVSHDSHNIVVIGRSAEEMALAVNQVIQDGGGLCVVRNGQVQSHLPLPIAGLMSTDTAQSLAEQIDALKAAARECGPLPDEPFIQMAFLSLPVIPALKLTSQGLFDGEKFAFTTLEVTE</sequence>
<organism>
    <name type="scientific">Escherichia coli O7:K1 (strain IAI39 / ExPEC)</name>
    <dbReference type="NCBI Taxonomy" id="585057"/>
    <lineage>
        <taxon>Bacteria</taxon>
        <taxon>Pseudomonadati</taxon>
        <taxon>Pseudomonadota</taxon>
        <taxon>Gammaproteobacteria</taxon>
        <taxon>Enterobacterales</taxon>
        <taxon>Enterobacteriaceae</taxon>
        <taxon>Escherichia</taxon>
    </lineage>
</organism>
<feature type="chain" id="PRO_1000146234" description="Adenine deaminase">
    <location>
        <begin position="1"/>
        <end position="588"/>
    </location>
</feature>
<reference key="1">
    <citation type="journal article" date="2009" name="PLoS Genet.">
        <title>Organised genome dynamics in the Escherichia coli species results in highly diverse adaptive paths.</title>
        <authorList>
            <person name="Touchon M."/>
            <person name="Hoede C."/>
            <person name="Tenaillon O."/>
            <person name="Barbe V."/>
            <person name="Baeriswyl S."/>
            <person name="Bidet P."/>
            <person name="Bingen E."/>
            <person name="Bonacorsi S."/>
            <person name="Bouchier C."/>
            <person name="Bouvet O."/>
            <person name="Calteau A."/>
            <person name="Chiapello H."/>
            <person name="Clermont O."/>
            <person name="Cruveiller S."/>
            <person name="Danchin A."/>
            <person name="Diard M."/>
            <person name="Dossat C."/>
            <person name="Karoui M.E."/>
            <person name="Frapy E."/>
            <person name="Garry L."/>
            <person name="Ghigo J.M."/>
            <person name="Gilles A.M."/>
            <person name="Johnson J."/>
            <person name="Le Bouguenec C."/>
            <person name="Lescat M."/>
            <person name="Mangenot S."/>
            <person name="Martinez-Jehanne V."/>
            <person name="Matic I."/>
            <person name="Nassif X."/>
            <person name="Oztas S."/>
            <person name="Petit M.A."/>
            <person name="Pichon C."/>
            <person name="Rouy Z."/>
            <person name="Ruf C.S."/>
            <person name="Schneider D."/>
            <person name="Tourret J."/>
            <person name="Vacherie B."/>
            <person name="Vallenet D."/>
            <person name="Medigue C."/>
            <person name="Rocha E.P.C."/>
            <person name="Denamur E."/>
        </authorList>
    </citation>
    <scope>NUCLEOTIDE SEQUENCE [LARGE SCALE GENOMIC DNA]</scope>
    <source>
        <strain>IAI39 / ExPEC</strain>
    </source>
</reference>
<dbReference type="EC" id="3.5.4.2" evidence="1"/>
<dbReference type="EMBL" id="CU928164">
    <property type="protein sequence ID" value="CAR20371.1"/>
    <property type="molecule type" value="Genomic_DNA"/>
</dbReference>
<dbReference type="RefSeq" id="YP_002410138.1">
    <property type="nucleotide sequence ID" value="NC_011750.1"/>
</dbReference>
<dbReference type="SMR" id="B7NQW3"/>
<dbReference type="STRING" id="585057.ECIAI39_4265"/>
<dbReference type="KEGG" id="ect:ECIAI39_4265"/>
<dbReference type="PATRIC" id="fig|585057.6.peg.4412"/>
<dbReference type="HOGENOM" id="CLU_027935_0_0_6"/>
<dbReference type="Proteomes" id="UP000000749">
    <property type="component" value="Chromosome"/>
</dbReference>
<dbReference type="GO" id="GO:0000034">
    <property type="term" value="F:adenine deaminase activity"/>
    <property type="evidence" value="ECO:0007669"/>
    <property type="project" value="UniProtKB-UniRule"/>
</dbReference>
<dbReference type="GO" id="GO:0006146">
    <property type="term" value="P:adenine catabolic process"/>
    <property type="evidence" value="ECO:0007669"/>
    <property type="project" value="InterPro"/>
</dbReference>
<dbReference type="CDD" id="cd01295">
    <property type="entry name" value="AdeC"/>
    <property type="match status" value="1"/>
</dbReference>
<dbReference type="FunFam" id="3.20.20.140:FF:000016">
    <property type="entry name" value="Adenine deaminase"/>
    <property type="match status" value="1"/>
</dbReference>
<dbReference type="Gene3D" id="3.20.20.140">
    <property type="entry name" value="Metal-dependent hydrolases"/>
    <property type="match status" value="1"/>
</dbReference>
<dbReference type="Gene3D" id="2.30.40.10">
    <property type="entry name" value="Urease, subunit C, domain 1"/>
    <property type="match status" value="1"/>
</dbReference>
<dbReference type="HAMAP" id="MF_01518">
    <property type="entry name" value="Adenine_deamin"/>
    <property type="match status" value="1"/>
</dbReference>
<dbReference type="InterPro" id="IPR006679">
    <property type="entry name" value="Adenine_deam"/>
</dbReference>
<dbReference type="InterPro" id="IPR026912">
    <property type="entry name" value="Adenine_deam_C"/>
</dbReference>
<dbReference type="InterPro" id="IPR006680">
    <property type="entry name" value="Amidohydro-rel"/>
</dbReference>
<dbReference type="InterPro" id="IPR011059">
    <property type="entry name" value="Metal-dep_hydrolase_composite"/>
</dbReference>
<dbReference type="InterPro" id="IPR032466">
    <property type="entry name" value="Metal_Hydrolase"/>
</dbReference>
<dbReference type="NCBIfam" id="TIGR01178">
    <property type="entry name" value="ade"/>
    <property type="match status" value="1"/>
</dbReference>
<dbReference type="NCBIfam" id="NF007457">
    <property type="entry name" value="PRK10027.1"/>
    <property type="match status" value="1"/>
</dbReference>
<dbReference type="PANTHER" id="PTHR11113:SF2">
    <property type="entry name" value="ADENINE DEAMINASE"/>
    <property type="match status" value="1"/>
</dbReference>
<dbReference type="PANTHER" id="PTHR11113">
    <property type="entry name" value="N-ACETYLGLUCOSAMINE-6-PHOSPHATE DEACETYLASE"/>
    <property type="match status" value="1"/>
</dbReference>
<dbReference type="Pfam" id="PF13382">
    <property type="entry name" value="Adenine_deam_C"/>
    <property type="match status" value="1"/>
</dbReference>
<dbReference type="Pfam" id="PF01979">
    <property type="entry name" value="Amidohydro_1"/>
    <property type="match status" value="1"/>
</dbReference>
<dbReference type="SUPFAM" id="SSF51338">
    <property type="entry name" value="Composite domain of metallo-dependent hydrolases"/>
    <property type="match status" value="1"/>
</dbReference>
<dbReference type="SUPFAM" id="SSF51556">
    <property type="entry name" value="Metallo-dependent hydrolases"/>
    <property type="match status" value="1"/>
</dbReference>
<name>ADEC_ECO7I</name>
<accession>B7NQW3</accession>
<protein>
    <recommendedName>
        <fullName evidence="1">Adenine deaminase</fullName>
        <shortName evidence="1">Adenase</shortName>
        <shortName evidence="1">Adenine aminase</shortName>
        <ecNumber evidence="1">3.5.4.2</ecNumber>
    </recommendedName>
</protein>
<gene>
    <name evidence="1" type="primary">ade</name>
    <name type="ordered locus">ECIAI39_4265</name>
</gene>
<comment type="catalytic activity">
    <reaction evidence="1">
        <text>adenine + H2O + H(+) = hypoxanthine + NH4(+)</text>
        <dbReference type="Rhea" id="RHEA:23688"/>
        <dbReference type="ChEBI" id="CHEBI:15377"/>
        <dbReference type="ChEBI" id="CHEBI:15378"/>
        <dbReference type="ChEBI" id="CHEBI:16708"/>
        <dbReference type="ChEBI" id="CHEBI:17368"/>
        <dbReference type="ChEBI" id="CHEBI:28938"/>
        <dbReference type="EC" id="3.5.4.2"/>
    </reaction>
</comment>
<comment type="cofactor">
    <cofactor evidence="1">
        <name>Mn(2+)</name>
        <dbReference type="ChEBI" id="CHEBI:29035"/>
    </cofactor>
</comment>
<comment type="subunit">
    <text evidence="1">Homodimer.</text>
</comment>
<comment type="similarity">
    <text evidence="1">Belongs to the metallo-dependent hydrolases superfamily. Adenine deaminase family.</text>
</comment>
<proteinExistence type="inferred from homology"/>
<keyword id="KW-0378">Hydrolase</keyword>
<keyword id="KW-0464">Manganese</keyword>